<protein>
    <recommendedName>
        <fullName evidence="1">Alanine--tRNA ligase</fullName>
        <ecNumber evidence="1">6.1.1.7</ecNumber>
    </recommendedName>
    <alternativeName>
        <fullName evidence="1">Alanyl-tRNA synthetase</fullName>
        <shortName evidence="1">AlaRS</shortName>
    </alternativeName>
</protein>
<evidence type="ECO:0000255" key="1">
    <source>
        <dbReference type="HAMAP-Rule" id="MF_00036"/>
    </source>
</evidence>
<evidence type="ECO:0000256" key="2">
    <source>
        <dbReference type="SAM" id="MobiDB-lite"/>
    </source>
</evidence>
<feature type="chain" id="PRO_0000347734" description="Alanine--tRNA ligase">
    <location>
        <begin position="1"/>
        <end position="868"/>
    </location>
</feature>
<feature type="region of interest" description="Disordered" evidence="2">
    <location>
        <begin position="828"/>
        <end position="847"/>
    </location>
</feature>
<feature type="binding site" evidence="1">
    <location>
        <position position="555"/>
    </location>
    <ligand>
        <name>Zn(2+)</name>
        <dbReference type="ChEBI" id="CHEBI:29105"/>
    </ligand>
</feature>
<feature type="binding site" evidence="1">
    <location>
        <position position="559"/>
    </location>
    <ligand>
        <name>Zn(2+)</name>
        <dbReference type="ChEBI" id="CHEBI:29105"/>
    </ligand>
</feature>
<feature type="binding site" evidence="1">
    <location>
        <position position="657"/>
    </location>
    <ligand>
        <name>Zn(2+)</name>
        <dbReference type="ChEBI" id="CHEBI:29105"/>
    </ligand>
</feature>
<feature type="binding site" evidence="1">
    <location>
        <position position="661"/>
    </location>
    <ligand>
        <name>Zn(2+)</name>
        <dbReference type="ChEBI" id="CHEBI:29105"/>
    </ligand>
</feature>
<reference key="1">
    <citation type="journal article" date="2005" name="Genome Res.">
        <title>Coping with cold: the genome of the versatile marine Antarctica bacterium Pseudoalteromonas haloplanktis TAC125.</title>
        <authorList>
            <person name="Medigue C."/>
            <person name="Krin E."/>
            <person name="Pascal G."/>
            <person name="Barbe V."/>
            <person name="Bernsel A."/>
            <person name="Bertin P.N."/>
            <person name="Cheung F."/>
            <person name="Cruveiller S."/>
            <person name="D'Amico S."/>
            <person name="Duilio A."/>
            <person name="Fang G."/>
            <person name="Feller G."/>
            <person name="Ho C."/>
            <person name="Mangenot S."/>
            <person name="Marino G."/>
            <person name="Nilsson J."/>
            <person name="Parrilli E."/>
            <person name="Rocha E.P.C."/>
            <person name="Rouy Z."/>
            <person name="Sekowska A."/>
            <person name="Tutino M.L."/>
            <person name="Vallenet D."/>
            <person name="von Heijne G."/>
            <person name="Danchin A."/>
        </authorList>
    </citation>
    <scope>NUCLEOTIDE SEQUENCE [LARGE SCALE GENOMIC DNA]</scope>
    <source>
        <strain>TAC 125</strain>
    </source>
</reference>
<sequence length="868" mass="94885">MQHMTTAQIRQQFLDFFASKQHQVVPSSSLIPGNDATLLFNNAGMVQFKDVFLGAESRPYTRATSSQRCVRAGGKHNDLENVGYTARHHTFFEMLGNFSFGDYFKQDAIKFAWQFLTEEVKLPKEKLLVTIYHDDEEAFNYWSNDIGLPADRIIRIATADNFWSMGDTGPCGPCSEIFYDHGEHIWGGPPGSPEEDGDRFIEIWNLVFMQYNRQNDGTMLPLPKQSVDTGMGLERIAAILQGVHSNYEIDLFKGLIAAAASVTNAQDMDDKSLRVVADHIRSCAFLISDGVMPSNEGRGYVLRRIIRRAVRHGNKLGAQGAFFYKLVAALIEQMGQAYPELAKQQEIIEKVLRIEEEQFGKTLERGLAILEESLSDLKGDVIPGDLVFKLYDTYGFPADLTADVARERQMTIDNKGFEECMAVQRKTAQQAGKFGADYNDQLKSDKQTTYKGYTTTSHSATVVEVFAGSESVSLLEDGQKGIVILDRTPFYAESGGQVGDTGVISVAGGEFTVTNTTKLGNAFAHHGIVQGRIGLNDKVEATIDDARRERIKKNHTATHILHETLRQLLGEHVGQKGSLVQAERLRFDFSHFEAVTKEELREIERVVNDEIRCNFALSTELMAIDDAKAKGAMALFGEKYDDEVRVVTIGDYSIELCGGTHVERAGDIGLFKIVSESGIAAGVRRIEAVTGADAIAYVSEQEQKLNDVAAVVKADSASVLEKVTALLDKSKQLEKQIAQLNDKLASAAGASLLDSVVEINGIKLLIANVKGTESKALRGMVDDLKNKIGSGVIALGVASDDKVSLIAGVTKDLTGRVKAGELVNHMASQVGGKGGGRPDMAQAGGSEPENLTAALDSVTAWFTEKTQA</sequence>
<keyword id="KW-0030">Aminoacyl-tRNA synthetase</keyword>
<keyword id="KW-0067">ATP-binding</keyword>
<keyword id="KW-0963">Cytoplasm</keyword>
<keyword id="KW-0436">Ligase</keyword>
<keyword id="KW-0479">Metal-binding</keyword>
<keyword id="KW-0547">Nucleotide-binding</keyword>
<keyword id="KW-0648">Protein biosynthesis</keyword>
<keyword id="KW-1185">Reference proteome</keyword>
<keyword id="KW-0694">RNA-binding</keyword>
<keyword id="KW-0820">tRNA-binding</keyword>
<keyword id="KW-0862">Zinc</keyword>
<proteinExistence type="inferred from homology"/>
<comment type="function">
    <text evidence="1">Catalyzes the attachment of alanine to tRNA(Ala) in a two-step reaction: alanine is first activated by ATP to form Ala-AMP and then transferred to the acceptor end of tRNA(Ala). Also edits incorrectly charged Ser-tRNA(Ala) and Gly-tRNA(Ala) via its editing domain.</text>
</comment>
<comment type="catalytic activity">
    <reaction evidence="1">
        <text>tRNA(Ala) + L-alanine + ATP = L-alanyl-tRNA(Ala) + AMP + diphosphate</text>
        <dbReference type="Rhea" id="RHEA:12540"/>
        <dbReference type="Rhea" id="RHEA-COMP:9657"/>
        <dbReference type="Rhea" id="RHEA-COMP:9923"/>
        <dbReference type="ChEBI" id="CHEBI:30616"/>
        <dbReference type="ChEBI" id="CHEBI:33019"/>
        <dbReference type="ChEBI" id="CHEBI:57972"/>
        <dbReference type="ChEBI" id="CHEBI:78442"/>
        <dbReference type="ChEBI" id="CHEBI:78497"/>
        <dbReference type="ChEBI" id="CHEBI:456215"/>
        <dbReference type="EC" id="6.1.1.7"/>
    </reaction>
</comment>
<comment type="cofactor">
    <cofactor evidence="1">
        <name>Zn(2+)</name>
        <dbReference type="ChEBI" id="CHEBI:29105"/>
    </cofactor>
    <text evidence="1">Binds 1 zinc ion per subunit.</text>
</comment>
<comment type="subcellular location">
    <subcellularLocation>
        <location evidence="1">Cytoplasm</location>
    </subcellularLocation>
</comment>
<comment type="domain">
    <text evidence="1">Consists of three domains; the N-terminal catalytic domain, the editing domain and the C-terminal C-Ala domain. The editing domain removes incorrectly charged amino acids, while the C-Ala domain, along with tRNA(Ala), serves as a bridge to cooperatively bring together the editing and aminoacylation centers thus stimulating deacylation of misacylated tRNAs.</text>
</comment>
<comment type="similarity">
    <text evidence="1">Belongs to the class-II aminoacyl-tRNA synthetase family.</text>
</comment>
<gene>
    <name evidence="1" type="primary">alaS</name>
    <name type="ordered locus">PSHAa0532</name>
</gene>
<organism>
    <name type="scientific">Pseudoalteromonas translucida (strain TAC 125)</name>
    <dbReference type="NCBI Taxonomy" id="326442"/>
    <lineage>
        <taxon>Bacteria</taxon>
        <taxon>Pseudomonadati</taxon>
        <taxon>Pseudomonadota</taxon>
        <taxon>Gammaproteobacteria</taxon>
        <taxon>Alteromonadales</taxon>
        <taxon>Pseudoalteromonadaceae</taxon>
        <taxon>Pseudoalteromonas</taxon>
    </lineage>
</organism>
<accession>Q3ILF3</accession>
<dbReference type="EC" id="6.1.1.7" evidence="1"/>
<dbReference type="EMBL" id="CR954246">
    <property type="protein sequence ID" value="CAI85621.1"/>
    <property type="molecule type" value="Genomic_DNA"/>
</dbReference>
<dbReference type="SMR" id="Q3ILF3"/>
<dbReference type="STRING" id="326442.PSHAa0532"/>
<dbReference type="KEGG" id="pha:PSHAa0532"/>
<dbReference type="PATRIC" id="fig|326442.8.peg.501"/>
<dbReference type="eggNOG" id="COG0013">
    <property type="taxonomic scope" value="Bacteria"/>
</dbReference>
<dbReference type="HOGENOM" id="CLU_004485_1_1_6"/>
<dbReference type="BioCyc" id="PHAL326442:PSHA_RS02600-MONOMER"/>
<dbReference type="Proteomes" id="UP000006843">
    <property type="component" value="Chromosome I"/>
</dbReference>
<dbReference type="GO" id="GO:0005829">
    <property type="term" value="C:cytosol"/>
    <property type="evidence" value="ECO:0007669"/>
    <property type="project" value="TreeGrafter"/>
</dbReference>
<dbReference type="GO" id="GO:0004813">
    <property type="term" value="F:alanine-tRNA ligase activity"/>
    <property type="evidence" value="ECO:0007669"/>
    <property type="project" value="UniProtKB-UniRule"/>
</dbReference>
<dbReference type="GO" id="GO:0002161">
    <property type="term" value="F:aminoacyl-tRNA deacylase activity"/>
    <property type="evidence" value="ECO:0007669"/>
    <property type="project" value="TreeGrafter"/>
</dbReference>
<dbReference type="GO" id="GO:0005524">
    <property type="term" value="F:ATP binding"/>
    <property type="evidence" value="ECO:0007669"/>
    <property type="project" value="UniProtKB-UniRule"/>
</dbReference>
<dbReference type="GO" id="GO:0000049">
    <property type="term" value="F:tRNA binding"/>
    <property type="evidence" value="ECO:0007669"/>
    <property type="project" value="UniProtKB-KW"/>
</dbReference>
<dbReference type="GO" id="GO:0008270">
    <property type="term" value="F:zinc ion binding"/>
    <property type="evidence" value="ECO:0007669"/>
    <property type="project" value="UniProtKB-UniRule"/>
</dbReference>
<dbReference type="GO" id="GO:0006419">
    <property type="term" value="P:alanyl-tRNA aminoacylation"/>
    <property type="evidence" value="ECO:0007669"/>
    <property type="project" value="UniProtKB-UniRule"/>
</dbReference>
<dbReference type="GO" id="GO:0045892">
    <property type="term" value="P:negative regulation of DNA-templated transcription"/>
    <property type="evidence" value="ECO:0007669"/>
    <property type="project" value="TreeGrafter"/>
</dbReference>
<dbReference type="CDD" id="cd00673">
    <property type="entry name" value="AlaRS_core"/>
    <property type="match status" value="1"/>
</dbReference>
<dbReference type="FunFam" id="2.40.30.130:FF:000001">
    <property type="entry name" value="Alanine--tRNA ligase"/>
    <property type="match status" value="1"/>
</dbReference>
<dbReference type="FunFam" id="3.10.310.40:FF:000001">
    <property type="entry name" value="Alanine--tRNA ligase"/>
    <property type="match status" value="1"/>
</dbReference>
<dbReference type="FunFam" id="3.30.54.20:FF:000001">
    <property type="entry name" value="Alanine--tRNA ligase"/>
    <property type="match status" value="1"/>
</dbReference>
<dbReference type="FunFam" id="3.30.930.10:FF:000004">
    <property type="entry name" value="Alanine--tRNA ligase"/>
    <property type="match status" value="1"/>
</dbReference>
<dbReference type="FunFam" id="3.30.980.10:FF:000004">
    <property type="entry name" value="Alanine--tRNA ligase, cytoplasmic"/>
    <property type="match status" value="1"/>
</dbReference>
<dbReference type="Gene3D" id="2.40.30.130">
    <property type="match status" value="1"/>
</dbReference>
<dbReference type="Gene3D" id="3.10.310.40">
    <property type="match status" value="1"/>
</dbReference>
<dbReference type="Gene3D" id="3.30.54.20">
    <property type="match status" value="1"/>
</dbReference>
<dbReference type="Gene3D" id="6.10.250.550">
    <property type="match status" value="1"/>
</dbReference>
<dbReference type="Gene3D" id="3.30.930.10">
    <property type="entry name" value="Bira Bifunctional Protein, Domain 2"/>
    <property type="match status" value="1"/>
</dbReference>
<dbReference type="Gene3D" id="3.30.980.10">
    <property type="entry name" value="Threonyl-trna Synthetase, Chain A, domain 2"/>
    <property type="match status" value="1"/>
</dbReference>
<dbReference type="HAMAP" id="MF_00036_B">
    <property type="entry name" value="Ala_tRNA_synth_B"/>
    <property type="match status" value="1"/>
</dbReference>
<dbReference type="InterPro" id="IPR045864">
    <property type="entry name" value="aa-tRNA-synth_II/BPL/LPL"/>
</dbReference>
<dbReference type="InterPro" id="IPR002318">
    <property type="entry name" value="Ala-tRNA-lgiase_IIc"/>
</dbReference>
<dbReference type="InterPro" id="IPR018162">
    <property type="entry name" value="Ala-tRNA-ligase_IIc_anticod-bd"/>
</dbReference>
<dbReference type="InterPro" id="IPR018165">
    <property type="entry name" value="Ala-tRNA-synth_IIc_core"/>
</dbReference>
<dbReference type="InterPro" id="IPR018164">
    <property type="entry name" value="Ala-tRNA-synth_IIc_N"/>
</dbReference>
<dbReference type="InterPro" id="IPR050058">
    <property type="entry name" value="Ala-tRNA_ligase"/>
</dbReference>
<dbReference type="InterPro" id="IPR023033">
    <property type="entry name" value="Ala_tRNA_ligase_euk/bac"/>
</dbReference>
<dbReference type="InterPro" id="IPR003156">
    <property type="entry name" value="DHHA1_dom"/>
</dbReference>
<dbReference type="InterPro" id="IPR018163">
    <property type="entry name" value="Thr/Ala-tRNA-synth_IIc_edit"/>
</dbReference>
<dbReference type="InterPro" id="IPR009000">
    <property type="entry name" value="Transl_B-barrel_sf"/>
</dbReference>
<dbReference type="InterPro" id="IPR012947">
    <property type="entry name" value="tRNA_SAD"/>
</dbReference>
<dbReference type="NCBIfam" id="TIGR00344">
    <property type="entry name" value="alaS"/>
    <property type="match status" value="1"/>
</dbReference>
<dbReference type="PANTHER" id="PTHR11777:SF9">
    <property type="entry name" value="ALANINE--TRNA LIGASE, CYTOPLASMIC"/>
    <property type="match status" value="1"/>
</dbReference>
<dbReference type="PANTHER" id="PTHR11777">
    <property type="entry name" value="ALANYL-TRNA SYNTHETASE"/>
    <property type="match status" value="1"/>
</dbReference>
<dbReference type="Pfam" id="PF02272">
    <property type="entry name" value="DHHA1"/>
    <property type="match status" value="1"/>
</dbReference>
<dbReference type="Pfam" id="PF01411">
    <property type="entry name" value="tRNA-synt_2c"/>
    <property type="match status" value="1"/>
</dbReference>
<dbReference type="Pfam" id="PF07973">
    <property type="entry name" value="tRNA_SAD"/>
    <property type="match status" value="1"/>
</dbReference>
<dbReference type="PRINTS" id="PR00980">
    <property type="entry name" value="TRNASYNTHALA"/>
</dbReference>
<dbReference type="SMART" id="SM00863">
    <property type="entry name" value="tRNA_SAD"/>
    <property type="match status" value="1"/>
</dbReference>
<dbReference type="SUPFAM" id="SSF55681">
    <property type="entry name" value="Class II aaRS and biotin synthetases"/>
    <property type="match status" value="1"/>
</dbReference>
<dbReference type="SUPFAM" id="SSF101353">
    <property type="entry name" value="Putative anticodon-binding domain of alanyl-tRNA synthetase (AlaRS)"/>
    <property type="match status" value="1"/>
</dbReference>
<dbReference type="SUPFAM" id="SSF55186">
    <property type="entry name" value="ThrRS/AlaRS common domain"/>
    <property type="match status" value="1"/>
</dbReference>
<dbReference type="SUPFAM" id="SSF50447">
    <property type="entry name" value="Translation proteins"/>
    <property type="match status" value="1"/>
</dbReference>
<dbReference type="PROSITE" id="PS50860">
    <property type="entry name" value="AA_TRNA_LIGASE_II_ALA"/>
    <property type="match status" value="1"/>
</dbReference>
<name>SYA_PSET1</name>